<organism>
    <name type="scientific">Schizosaccharomyces pombe (strain 972 / ATCC 24843)</name>
    <name type="common">Fission yeast</name>
    <dbReference type="NCBI Taxonomy" id="284812"/>
    <lineage>
        <taxon>Eukaryota</taxon>
        <taxon>Fungi</taxon>
        <taxon>Dikarya</taxon>
        <taxon>Ascomycota</taxon>
        <taxon>Taphrinomycotina</taxon>
        <taxon>Schizosaccharomycetes</taxon>
        <taxon>Schizosaccharomycetales</taxon>
        <taxon>Schizosaccharomycetaceae</taxon>
        <taxon>Schizosaccharomyces</taxon>
    </lineage>
</organism>
<keyword id="KW-0175">Coiled coil</keyword>
<keyword id="KW-0539">Nucleus</keyword>
<keyword id="KW-1185">Reference proteome</keyword>
<keyword id="KW-0804">Transcription</keyword>
<keyword id="KW-0805">Transcription regulation</keyword>
<gene>
    <name type="primary">iws1</name>
    <name type="ORF">SPBC19G7.16</name>
</gene>
<accession>O42964</accession>
<evidence type="ECO:0000250" key="1"/>
<evidence type="ECO:0000255" key="2"/>
<evidence type="ECO:0000255" key="3">
    <source>
        <dbReference type="PROSITE-ProRule" id="PRU00649"/>
    </source>
</evidence>
<evidence type="ECO:0000256" key="4">
    <source>
        <dbReference type="SAM" id="MobiDB-lite"/>
    </source>
</evidence>
<evidence type="ECO:0000305" key="5"/>
<comment type="function">
    <text evidence="1">Transcription factor involved in RNA polymerase II transcription regulation. May function in both SPT15/TBP post-recruitment and recruitment steps of transcription (By similarity).</text>
</comment>
<comment type="subcellular location">
    <subcellularLocation>
        <location evidence="3">Nucleus</location>
    </subcellularLocation>
</comment>
<comment type="similarity">
    <text evidence="5">Belongs to the IWS1 family.</text>
</comment>
<reference key="1">
    <citation type="journal article" date="2002" name="Nature">
        <title>The genome sequence of Schizosaccharomyces pombe.</title>
        <authorList>
            <person name="Wood V."/>
            <person name="Gwilliam R."/>
            <person name="Rajandream M.A."/>
            <person name="Lyne M.H."/>
            <person name="Lyne R."/>
            <person name="Stewart A."/>
            <person name="Sgouros J.G."/>
            <person name="Peat N."/>
            <person name="Hayles J."/>
            <person name="Baker S.G."/>
            <person name="Basham D."/>
            <person name="Bowman S."/>
            <person name="Brooks K."/>
            <person name="Brown D."/>
            <person name="Brown S."/>
            <person name="Chillingworth T."/>
            <person name="Churcher C.M."/>
            <person name="Collins M."/>
            <person name="Connor R."/>
            <person name="Cronin A."/>
            <person name="Davis P."/>
            <person name="Feltwell T."/>
            <person name="Fraser A."/>
            <person name="Gentles S."/>
            <person name="Goble A."/>
            <person name="Hamlin N."/>
            <person name="Harris D.E."/>
            <person name="Hidalgo J."/>
            <person name="Hodgson G."/>
            <person name="Holroyd S."/>
            <person name="Hornsby T."/>
            <person name="Howarth S."/>
            <person name="Huckle E.J."/>
            <person name="Hunt S."/>
            <person name="Jagels K."/>
            <person name="James K.D."/>
            <person name="Jones L."/>
            <person name="Jones M."/>
            <person name="Leather S."/>
            <person name="McDonald S."/>
            <person name="McLean J."/>
            <person name="Mooney P."/>
            <person name="Moule S."/>
            <person name="Mungall K.L."/>
            <person name="Murphy L.D."/>
            <person name="Niblett D."/>
            <person name="Odell C."/>
            <person name="Oliver K."/>
            <person name="O'Neil S."/>
            <person name="Pearson D."/>
            <person name="Quail M.A."/>
            <person name="Rabbinowitsch E."/>
            <person name="Rutherford K.M."/>
            <person name="Rutter S."/>
            <person name="Saunders D."/>
            <person name="Seeger K."/>
            <person name="Sharp S."/>
            <person name="Skelton J."/>
            <person name="Simmonds M.N."/>
            <person name="Squares R."/>
            <person name="Squares S."/>
            <person name="Stevens K."/>
            <person name="Taylor K."/>
            <person name="Taylor R.G."/>
            <person name="Tivey A."/>
            <person name="Walsh S.V."/>
            <person name="Warren T."/>
            <person name="Whitehead S."/>
            <person name="Woodward J.R."/>
            <person name="Volckaert G."/>
            <person name="Aert R."/>
            <person name="Robben J."/>
            <person name="Grymonprez B."/>
            <person name="Weltjens I."/>
            <person name="Vanstreels E."/>
            <person name="Rieger M."/>
            <person name="Schaefer M."/>
            <person name="Mueller-Auer S."/>
            <person name="Gabel C."/>
            <person name="Fuchs M."/>
            <person name="Duesterhoeft A."/>
            <person name="Fritzc C."/>
            <person name="Holzer E."/>
            <person name="Moestl D."/>
            <person name="Hilbert H."/>
            <person name="Borzym K."/>
            <person name="Langer I."/>
            <person name="Beck A."/>
            <person name="Lehrach H."/>
            <person name="Reinhardt R."/>
            <person name="Pohl T.M."/>
            <person name="Eger P."/>
            <person name="Zimmermann W."/>
            <person name="Wedler H."/>
            <person name="Wambutt R."/>
            <person name="Purnelle B."/>
            <person name="Goffeau A."/>
            <person name="Cadieu E."/>
            <person name="Dreano S."/>
            <person name="Gloux S."/>
            <person name="Lelaure V."/>
            <person name="Mottier S."/>
            <person name="Galibert F."/>
            <person name="Aves S.J."/>
            <person name="Xiang Z."/>
            <person name="Hunt C."/>
            <person name="Moore K."/>
            <person name="Hurst S.M."/>
            <person name="Lucas M."/>
            <person name="Rochet M."/>
            <person name="Gaillardin C."/>
            <person name="Tallada V.A."/>
            <person name="Garzon A."/>
            <person name="Thode G."/>
            <person name="Daga R.R."/>
            <person name="Cruzado L."/>
            <person name="Jimenez J."/>
            <person name="Sanchez M."/>
            <person name="del Rey F."/>
            <person name="Benito J."/>
            <person name="Dominguez A."/>
            <person name="Revuelta J.L."/>
            <person name="Moreno S."/>
            <person name="Armstrong J."/>
            <person name="Forsburg S.L."/>
            <person name="Cerutti L."/>
            <person name="Lowe T."/>
            <person name="McCombie W.R."/>
            <person name="Paulsen I."/>
            <person name="Potashkin J."/>
            <person name="Shpakovski G.V."/>
            <person name="Ussery D."/>
            <person name="Barrell B.G."/>
            <person name="Nurse P."/>
        </authorList>
    </citation>
    <scope>NUCLEOTIDE SEQUENCE [LARGE SCALE GENOMIC DNA]</scope>
    <source>
        <strain>972 / ATCC 24843</strain>
    </source>
</reference>
<proteinExistence type="inferred from homology"/>
<name>IWS1_SCHPO</name>
<sequence length="428" mass="49114">MSEEEKAELENMQVESEAKTSENDQTIDTKVDVADVTTHVDEDLDNKEEALDFSEDELSDLDENQFENFDESKIGREAEEPTIYNLPTFKKKQEPNTIEENLEVPRKVRKEQKPRRRRGKRSSTVDALNDELNELGENEEEVLTEQKQLDPTLAAKKELDLQMDAVLKPTRTKKRSNEDNLEQMADDEVLRLREQMRLAALRDAELNSEQLPATEKLKMLPLVDAVLRKTHLYDTILDNNVLDSVRMWLEPLPDRSLPALNIQRSLMDILTKLPIQTEHLRESKIGRIVLFYTISKKPEPFIKRIADNLVSEWSRPIIKRSANYRDRAVGVASFNPEVFQTRRRRDLAAAESNDDAQASRTGRTVIPRSIDSRYQVAPRVRLNPTAMTIAGRMKPADTEQVRKLKAKMKAIRSKSSKKSGVSIEGRGL</sequence>
<feature type="chain" id="PRO_0000083363" description="Transcription factor iws1">
    <location>
        <begin position="1"/>
        <end position="428"/>
    </location>
</feature>
<feature type="domain" description="TFIIS N-terminal" evidence="3">
    <location>
        <begin position="243"/>
        <end position="320"/>
    </location>
</feature>
<feature type="region of interest" description="Disordered" evidence="4">
    <location>
        <begin position="1"/>
        <end position="126"/>
    </location>
</feature>
<feature type="region of interest" description="Disordered" evidence="4">
    <location>
        <begin position="346"/>
        <end position="365"/>
    </location>
</feature>
<feature type="region of interest" description="Disordered" evidence="4">
    <location>
        <begin position="408"/>
        <end position="428"/>
    </location>
</feature>
<feature type="coiled-coil region" evidence="2">
    <location>
        <begin position="2"/>
        <end position="65"/>
    </location>
</feature>
<feature type="compositionally biased region" description="Basic and acidic residues" evidence="4">
    <location>
        <begin position="16"/>
        <end position="41"/>
    </location>
</feature>
<feature type="compositionally biased region" description="Acidic residues" evidence="4">
    <location>
        <begin position="42"/>
        <end position="69"/>
    </location>
</feature>
<feature type="compositionally biased region" description="Basic and acidic residues" evidence="4">
    <location>
        <begin position="70"/>
        <end position="79"/>
    </location>
</feature>
<feature type="compositionally biased region" description="Basic residues" evidence="4">
    <location>
        <begin position="107"/>
        <end position="121"/>
    </location>
</feature>
<feature type="compositionally biased region" description="Basic residues" evidence="4">
    <location>
        <begin position="408"/>
        <end position="417"/>
    </location>
</feature>
<dbReference type="EMBL" id="CU329671">
    <property type="protein sequence ID" value="CAA17070.1"/>
    <property type="molecule type" value="Genomic_DNA"/>
</dbReference>
<dbReference type="PIR" id="T39847">
    <property type="entry name" value="T39847"/>
</dbReference>
<dbReference type="RefSeq" id="NP_595982.1">
    <property type="nucleotide sequence ID" value="NM_001021889.2"/>
</dbReference>
<dbReference type="SMR" id="O42964"/>
<dbReference type="BioGRID" id="277244">
    <property type="interactions" value="5"/>
</dbReference>
<dbReference type="FunCoup" id="O42964">
    <property type="interactions" value="438"/>
</dbReference>
<dbReference type="STRING" id="284812.O42964"/>
<dbReference type="iPTMnet" id="O42964"/>
<dbReference type="PaxDb" id="4896-SPBC19G7.16.1"/>
<dbReference type="EnsemblFungi" id="SPBC19G7.16.1">
    <property type="protein sequence ID" value="SPBC19G7.16.1:pep"/>
    <property type="gene ID" value="SPBC19G7.16"/>
</dbReference>
<dbReference type="GeneID" id="2540721"/>
<dbReference type="KEGG" id="spo:2540721"/>
<dbReference type="PomBase" id="SPBC19G7.16">
    <property type="gene designation" value="iws1"/>
</dbReference>
<dbReference type="VEuPathDB" id="FungiDB:SPBC19G7.16"/>
<dbReference type="eggNOG" id="KOG1793">
    <property type="taxonomic scope" value="Eukaryota"/>
</dbReference>
<dbReference type="HOGENOM" id="CLU_045275_1_0_1"/>
<dbReference type="InParanoid" id="O42964"/>
<dbReference type="OMA" id="MPAYNIQ"/>
<dbReference type="PhylomeDB" id="O42964"/>
<dbReference type="PRO" id="PR:O42964"/>
<dbReference type="Proteomes" id="UP000002485">
    <property type="component" value="Chromosome II"/>
</dbReference>
<dbReference type="GO" id="GO:0072686">
    <property type="term" value="C:mitotic spindle"/>
    <property type="evidence" value="ECO:0007005"/>
    <property type="project" value="PomBase"/>
</dbReference>
<dbReference type="GO" id="GO:0005730">
    <property type="term" value="C:nucleolus"/>
    <property type="evidence" value="ECO:0007005"/>
    <property type="project" value="PomBase"/>
</dbReference>
<dbReference type="GO" id="GO:0005634">
    <property type="term" value="C:nucleus"/>
    <property type="evidence" value="ECO:0007005"/>
    <property type="project" value="PomBase"/>
</dbReference>
<dbReference type="GO" id="GO:0016973">
    <property type="term" value="P:poly(A)+ mRNA export from nucleus"/>
    <property type="evidence" value="ECO:0000318"/>
    <property type="project" value="GO_Central"/>
</dbReference>
<dbReference type="FunFam" id="1.20.930.10:FF:000003">
    <property type="entry name" value="Putative Transcription factor IWS1"/>
    <property type="match status" value="1"/>
</dbReference>
<dbReference type="Gene3D" id="1.20.930.10">
    <property type="entry name" value="Conserved domain common to transcription factors TFIIS, elongin A, CRSP70"/>
    <property type="match status" value="1"/>
</dbReference>
<dbReference type="InterPro" id="IPR051037">
    <property type="entry name" value="RNAPII_TF_IWS1"/>
</dbReference>
<dbReference type="InterPro" id="IPR035441">
    <property type="entry name" value="TFIIS/LEDGF_dom_sf"/>
</dbReference>
<dbReference type="InterPro" id="IPR017923">
    <property type="entry name" value="TFIIS_N"/>
</dbReference>
<dbReference type="PANTHER" id="PTHR46010">
    <property type="entry name" value="PROTEIN IWS1 HOMOLOG"/>
    <property type="match status" value="1"/>
</dbReference>
<dbReference type="PANTHER" id="PTHR46010:SF1">
    <property type="entry name" value="PROTEIN IWS1 HOMOLOG"/>
    <property type="match status" value="1"/>
</dbReference>
<dbReference type="Pfam" id="PF08711">
    <property type="entry name" value="Med26"/>
    <property type="match status" value="1"/>
</dbReference>
<dbReference type="SUPFAM" id="SSF47676">
    <property type="entry name" value="Conserved domain common to transcription factors TFIIS, elongin A, CRSP70"/>
    <property type="match status" value="1"/>
</dbReference>
<dbReference type="PROSITE" id="PS51319">
    <property type="entry name" value="TFIIS_N"/>
    <property type="match status" value="1"/>
</dbReference>
<protein>
    <recommendedName>
        <fullName>Transcription factor iws1</fullName>
    </recommendedName>
</protein>